<comment type="similarity">
    <text evidence="1">Belongs to the UPF0342 family.</text>
</comment>
<proteinExistence type="inferred from homology"/>
<organism>
    <name type="scientific">Caldicellulosiruptor saccharolyticus (strain ATCC 43494 / DSM 8903 / Tp8T 6331)</name>
    <dbReference type="NCBI Taxonomy" id="351627"/>
    <lineage>
        <taxon>Bacteria</taxon>
        <taxon>Bacillati</taxon>
        <taxon>Bacillota</taxon>
        <taxon>Bacillota incertae sedis</taxon>
        <taxon>Caldicellulosiruptorales</taxon>
        <taxon>Caldicellulosiruptoraceae</taxon>
        <taxon>Caldicellulosiruptor</taxon>
    </lineage>
</organism>
<evidence type="ECO:0000255" key="1">
    <source>
        <dbReference type="HAMAP-Rule" id="MF_01526"/>
    </source>
</evidence>
<dbReference type="EMBL" id="CP000679">
    <property type="protein sequence ID" value="ABP66479.1"/>
    <property type="molecule type" value="Genomic_DNA"/>
</dbReference>
<dbReference type="RefSeq" id="WP_011916425.1">
    <property type="nucleotide sequence ID" value="NC_009437.1"/>
</dbReference>
<dbReference type="SMR" id="A4XHU4"/>
<dbReference type="STRING" id="351627.Csac_0863"/>
<dbReference type="KEGG" id="csc:Csac_0863"/>
<dbReference type="eggNOG" id="COG3679">
    <property type="taxonomic scope" value="Bacteria"/>
</dbReference>
<dbReference type="HOGENOM" id="CLU_140243_2_0_9"/>
<dbReference type="OrthoDB" id="9811402at2"/>
<dbReference type="Proteomes" id="UP000000256">
    <property type="component" value="Chromosome"/>
</dbReference>
<dbReference type="Gene3D" id="1.20.1500.10">
    <property type="entry name" value="YheA/YmcA-like"/>
    <property type="match status" value="1"/>
</dbReference>
<dbReference type="HAMAP" id="MF_01526">
    <property type="entry name" value="UPF0342"/>
    <property type="match status" value="1"/>
</dbReference>
<dbReference type="InterPro" id="IPR010368">
    <property type="entry name" value="Com_YlbF"/>
</dbReference>
<dbReference type="InterPro" id="IPR023378">
    <property type="entry name" value="YheA/YmcA-like_dom_sf"/>
</dbReference>
<dbReference type="Pfam" id="PF06133">
    <property type="entry name" value="Com_YlbF"/>
    <property type="match status" value="1"/>
</dbReference>
<dbReference type="SUPFAM" id="SSF158622">
    <property type="entry name" value="YheA/YmcA-like"/>
    <property type="match status" value="1"/>
</dbReference>
<feature type="chain" id="PRO_0000316269" description="UPF0342 protein Csac_0863">
    <location>
        <begin position="1"/>
        <end position="120"/>
    </location>
</feature>
<reference key="1">
    <citation type="submission" date="2007-04" db="EMBL/GenBank/DDBJ databases">
        <title>Genome sequence of the thermophilic hydrogen-producing bacterium Caldicellulosiruptor saccharolyticus DSM 8903.</title>
        <authorList>
            <person name="Copeland A."/>
            <person name="Lucas S."/>
            <person name="Lapidus A."/>
            <person name="Barry K."/>
            <person name="Detter J.C."/>
            <person name="Glavina del Rio T."/>
            <person name="Hammon N."/>
            <person name="Israni S."/>
            <person name="Dalin E."/>
            <person name="Tice H."/>
            <person name="Pitluck S."/>
            <person name="Kiss H."/>
            <person name="Brettin T."/>
            <person name="Bruce D."/>
            <person name="Han C."/>
            <person name="Schmutz J."/>
            <person name="Larimer F."/>
            <person name="Land M."/>
            <person name="Hauser L."/>
            <person name="Kyrpides N."/>
            <person name="Lykidis A."/>
            <person name="van de Werken H.J.G."/>
            <person name="Verhaart M.R.A."/>
            <person name="VanFossen A.L."/>
            <person name="Lewis D.L."/>
            <person name="Nichols J.D."/>
            <person name="Goorissen H.P."/>
            <person name="van Niel E.W.J."/>
            <person name="Stams F.J.M."/>
            <person name="Willquist K.U."/>
            <person name="Ward D.E."/>
            <person name="van der Oost J."/>
            <person name="Kelly R.M."/>
            <person name="Kengen S.M.W."/>
            <person name="Richardson P."/>
        </authorList>
    </citation>
    <scope>NUCLEOTIDE SEQUENCE [LARGE SCALE GENOMIC DNA]</scope>
    <source>
        <strain>ATCC 43494 / DSM 8903 / Tp8T 6331</strain>
    </source>
</reference>
<name>Y863_CALS8</name>
<protein>
    <recommendedName>
        <fullName evidence="1">UPF0342 protein Csac_0863</fullName>
    </recommendedName>
</protein>
<accession>A4XHU4</accession>
<sequence>MRNVYDIAYELANALKESNEFKRFKAAKEKIEKDEKLKQMVMDFKKKQLELEQKRLQGQEVTSSDVYSLQQLYQIISLNPDIEEYLSSEMMLAKILADISKIIAEAVDLKDEMFGLLESK</sequence>
<gene>
    <name type="ordered locus">Csac_0863</name>
</gene>